<accession>B7J462</accession>
<gene>
    <name evidence="2" type="primary">rpsL</name>
    <name type="ordered locus">AFE_0322</name>
</gene>
<feature type="chain" id="PRO_1000194100" description="Small ribosomal subunit protein uS12">
    <location>
        <begin position="1"/>
        <end position="123"/>
    </location>
</feature>
<feature type="region of interest" description="Disordered" evidence="3">
    <location>
        <begin position="1"/>
        <end position="26"/>
    </location>
</feature>
<feature type="region of interest" description="Disordered" evidence="3">
    <location>
        <begin position="104"/>
        <end position="123"/>
    </location>
</feature>
<feature type="compositionally biased region" description="Basic residues" evidence="3">
    <location>
        <begin position="108"/>
        <end position="123"/>
    </location>
</feature>
<feature type="modified residue" description="3-methylthioaspartic acid" evidence="1">
    <location>
        <position position="89"/>
    </location>
</feature>
<dbReference type="EMBL" id="CP001219">
    <property type="protein sequence ID" value="ACK78428.1"/>
    <property type="molecule type" value="Genomic_DNA"/>
</dbReference>
<dbReference type="RefSeq" id="WP_010641426.1">
    <property type="nucleotide sequence ID" value="NC_011761.1"/>
</dbReference>
<dbReference type="SMR" id="B7J462"/>
<dbReference type="STRING" id="243159.AFE_0322"/>
<dbReference type="PaxDb" id="243159-AFE_0322"/>
<dbReference type="GeneID" id="89663798"/>
<dbReference type="KEGG" id="afr:AFE_0322"/>
<dbReference type="eggNOG" id="COG0048">
    <property type="taxonomic scope" value="Bacteria"/>
</dbReference>
<dbReference type="HOGENOM" id="CLU_104295_1_2_6"/>
<dbReference type="Proteomes" id="UP000001362">
    <property type="component" value="Chromosome"/>
</dbReference>
<dbReference type="GO" id="GO:0015935">
    <property type="term" value="C:small ribosomal subunit"/>
    <property type="evidence" value="ECO:0007669"/>
    <property type="project" value="InterPro"/>
</dbReference>
<dbReference type="GO" id="GO:0019843">
    <property type="term" value="F:rRNA binding"/>
    <property type="evidence" value="ECO:0007669"/>
    <property type="project" value="UniProtKB-UniRule"/>
</dbReference>
<dbReference type="GO" id="GO:0003735">
    <property type="term" value="F:structural constituent of ribosome"/>
    <property type="evidence" value="ECO:0007669"/>
    <property type="project" value="InterPro"/>
</dbReference>
<dbReference type="GO" id="GO:0000049">
    <property type="term" value="F:tRNA binding"/>
    <property type="evidence" value="ECO:0007669"/>
    <property type="project" value="UniProtKB-UniRule"/>
</dbReference>
<dbReference type="GO" id="GO:0006412">
    <property type="term" value="P:translation"/>
    <property type="evidence" value="ECO:0007669"/>
    <property type="project" value="UniProtKB-UniRule"/>
</dbReference>
<dbReference type="CDD" id="cd03368">
    <property type="entry name" value="Ribosomal_S12"/>
    <property type="match status" value="1"/>
</dbReference>
<dbReference type="FunFam" id="2.40.50.140:FF:000001">
    <property type="entry name" value="30S ribosomal protein S12"/>
    <property type="match status" value="1"/>
</dbReference>
<dbReference type="Gene3D" id="2.40.50.140">
    <property type="entry name" value="Nucleic acid-binding proteins"/>
    <property type="match status" value="1"/>
</dbReference>
<dbReference type="HAMAP" id="MF_00403_B">
    <property type="entry name" value="Ribosomal_uS12_B"/>
    <property type="match status" value="1"/>
</dbReference>
<dbReference type="InterPro" id="IPR012340">
    <property type="entry name" value="NA-bd_OB-fold"/>
</dbReference>
<dbReference type="InterPro" id="IPR006032">
    <property type="entry name" value="Ribosomal_uS12"/>
</dbReference>
<dbReference type="InterPro" id="IPR005679">
    <property type="entry name" value="Ribosomal_uS12_bac"/>
</dbReference>
<dbReference type="NCBIfam" id="TIGR00981">
    <property type="entry name" value="rpsL_bact"/>
    <property type="match status" value="1"/>
</dbReference>
<dbReference type="PANTHER" id="PTHR11652">
    <property type="entry name" value="30S RIBOSOMAL PROTEIN S12 FAMILY MEMBER"/>
    <property type="match status" value="1"/>
</dbReference>
<dbReference type="Pfam" id="PF00164">
    <property type="entry name" value="Ribosom_S12_S23"/>
    <property type="match status" value="1"/>
</dbReference>
<dbReference type="PIRSF" id="PIRSF002133">
    <property type="entry name" value="Ribosomal_S12/S23"/>
    <property type="match status" value="1"/>
</dbReference>
<dbReference type="PRINTS" id="PR01034">
    <property type="entry name" value="RIBOSOMALS12"/>
</dbReference>
<dbReference type="SUPFAM" id="SSF50249">
    <property type="entry name" value="Nucleic acid-binding proteins"/>
    <property type="match status" value="1"/>
</dbReference>
<dbReference type="PROSITE" id="PS00055">
    <property type="entry name" value="RIBOSOMAL_S12"/>
    <property type="match status" value="1"/>
</dbReference>
<keyword id="KW-0488">Methylation</keyword>
<keyword id="KW-1185">Reference proteome</keyword>
<keyword id="KW-0687">Ribonucleoprotein</keyword>
<keyword id="KW-0689">Ribosomal protein</keyword>
<keyword id="KW-0694">RNA-binding</keyword>
<keyword id="KW-0699">rRNA-binding</keyword>
<keyword id="KW-0820">tRNA-binding</keyword>
<proteinExistence type="inferred from homology"/>
<name>RS12_ACIF2</name>
<protein>
    <recommendedName>
        <fullName evidence="2">Small ribosomal subunit protein uS12</fullName>
    </recommendedName>
    <alternativeName>
        <fullName evidence="4">30S ribosomal protein S12</fullName>
    </alternativeName>
</protein>
<reference key="1">
    <citation type="journal article" date="2008" name="BMC Genomics">
        <title>Acidithiobacillus ferrooxidans metabolism: from genome sequence to industrial applications.</title>
        <authorList>
            <person name="Valdes J."/>
            <person name="Pedroso I."/>
            <person name="Quatrini R."/>
            <person name="Dodson R.J."/>
            <person name="Tettelin H."/>
            <person name="Blake R. II"/>
            <person name="Eisen J.A."/>
            <person name="Holmes D.S."/>
        </authorList>
    </citation>
    <scope>NUCLEOTIDE SEQUENCE [LARGE SCALE GENOMIC DNA]</scope>
    <source>
        <strain>ATCC 23270 / DSM 14882 / CIP 104768 / NCIMB 8455</strain>
    </source>
</reference>
<comment type="function">
    <text evidence="2">With S4 and S5 plays an important role in translational accuracy.</text>
</comment>
<comment type="function">
    <text evidence="2">Interacts with and stabilizes bases of the 16S rRNA that are involved in tRNA selection in the A site and with the mRNA backbone. Located at the interface of the 30S and 50S subunits, it traverses the body of the 30S subunit contacting proteins on the other side and probably holding the rRNA structure together. The combined cluster of proteins S8, S12 and S17 appears to hold together the shoulder and platform of the 30S subunit.</text>
</comment>
<comment type="subunit">
    <text evidence="2">Part of the 30S ribosomal subunit. Contacts proteins S8 and S17. May interact with IF1 in the 30S initiation complex.</text>
</comment>
<comment type="similarity">
    <text evidence="2">Belongs to the universal ribosomal protein uS12 family.</text>
</comment>
<evidence type="ECO:0000250" key="1"/>
<evidence type="ECO:0000255" key="2">
    <source>
        <dbReference type="HAMAP-Rule" id="MF_00403"/>
    </source>
</evidence>
<evidence type="ECO:0000256" key="3">
    <source>
        <dbReference type="SAM" id="MobiDB-lite"/>
    </source>
</evidence>
<evidence type="ECO:0000305" key="4"/>
<organism>
    <name type="scientific">Acidithiobacillus ferrooxidans (strain ATCC 23270 / DSM 14882 / CIP 104768 / NCIMB 8455)</name>
    <name type="common">Ferrobacillus ferrooxidans (strain ATCC 23270)</name>
    <dbReference type="NCBI Taxonomy" id="243159"/>
    <lineage>
        <taxon>Bacteria</taxon>
        <taxon>Pseudomonadati</taxon>
        <taxon>Pseudomonadota</taxon>
        <taxon>Acidithiobacillia</taxon>
        <taxon>Acidithiobacillales</taxon>
        <taxon>Acidithiobacillaceae</taxon>
        <taxon>Acidithiobacillus</taxon>
    </lineage>
</organism>
<sequence length="123" mass="13734">MPTLNQLVRKPRKRPVAKSKVPALDANPQKRGVCTRVYTTTPKKPNSALRKVARVRLTNGFEVSSYIPGEGHNLQEHSVVLIRGGRVKDLPGVRYHIVRGTLDTAGVKNRKQSRSKYGAKRPK</sequence>